<organism>
    <name type="scientific">Alteromonas mediterranea (strain DSM 17117 / CIP 110805 / LMG 28347 / Deep ecotype)</name>
    <dbReference type="NCBI Taxonomy" id="1774373"/>
    <lineage>
        <taxon>Bacteria</taxon>
        <taxon>Pseudomonadati</taxon>
        <taxon>Pseudomonadota</taxon>
        <taxon>Gammaproteobacteria</taxon>
        <taxon>Alteromonadales</taxon>
        <taxon>Alteromonadaceae</taxon>
        <taxon>Alteromonas/Salinimonas group</taxon>
        <taxon>Alteromonas</taxon>
    </lineage>
</organism>
<reference key="1">
    <citation type="journal article" date="2008" name="ISME J.">
        <title>Comparative genomics of two ecotypes of the marine planktonic copiotroph Alteromonas macleodii suggests alternative lifestyles associated with different kinds of particulate organic matter.</title>
        <authorList>
            <person name="Ivars-Martinez E."/>
            <person name="Martin-Cuadrado A.-B."/>
            <person name="D'Auria G."/>
            <person name="Mira A."/>
            <person name="Ferriera S."/>
            <person name="Johnson J."/>
            <person name="Friedman R."/>
            <person name="Rodriguez-Valera F."/>
        </authorList>
    </citation>
    <scope>NUCLEOTIDE SEQUENCE [LARGE SCALE GENOMIC DNA]</scope>
    <source>
        <strain>DSM 17117 / CIP 110805 / LMG 28347 / Deep ecotype</strain>
    </source>
</reference>
<protein>
    <recommendedName>
        <fullName evidence="1">Large ribosomal subunit protein bL9</fullName>
    </recommendedName>
    <alternativeName>
        <fullName evidence="2">50S ribosomal protein L9</fullName>
    </alternativeName>
</protein>
<dbReference type="EMBL" id="CP001103">
    <property type="protein sequence ID" value="AEA99912.1"/>
    <property type="molecule type" value="Genomic_DNA"/>
</dbReference>
<dbReference type="RefSeq" id="WP_012519953.1">
    <property type="nucleotide sequence ID" value="NC_011138.3"/>
</dbReference>
<dbReference type="SMR" id="B4S010"/>
<dbReference type="GeneID" id="56268833"/>
<dbReference type="KEGG" id="amc:MADE_1018940"/>
<dbReference type="HOGENOM" id="CLU_078938_4_1_6"/>
<dbReference type="Proteomes" id="UP000001870">
    <property type="component" value="Chromosome"/>
</dbReference>
<dbReference type="GO" id="GO:1990904">
    <property type="term" value="C:ribonucleoprotein complex"/>
    <property type="evidence" value="ECO:0007669"/>
    <property type="project" value="UniProtKB-KW"/>
</dbReference>
<dbReference type="GO" id="GO:0005840">
    <property type="term" value="C:ribosome"/>
    <property type="evidence" value="ECO:0007669"/>
    <property type="project" value="UniProtKB-KW"/>
</dbReference>
<dbReference type="GO" id="GO:0019843">
    <property type="term" value="F:rRNA binding"/>
    <property type="evidence" value="ECO:0007669"/>
    <property type="project" value="UniProtKB-UniRule"/>
</dbReference>
<dbReference type="GO" id="GO:0003735">
    <property type="term" value="F:structural constituent of ribosome"/>
    <property type="evidence" value="ECO:0007669"/>
    <property type="project" value="InterPro"/>
</dbReference>
<dbReference type="GO" id="GO:0006412">
    <property type="term" value="P:translation"/>
    <property type="evidence" value="ECO:0007669"/>
    <property type="project" value="UniProtKB-UniRule"/>
</dbReference>
<dbReference type="FunFam" id="3.10.430.100:FF:000001">
    <property type="entry name" value="50S ribosomal protein L9"/>
    <property type="match status" value="1"/>
</dbReference>
<dbReference type="FunFam" id="3.40.5.10:FF:000001">
    <property type="entry name" value="50S ribosomal protein L9"/>
    <property type="match status" value="1"/>
</dbReference>
<dbReference type="Gene3D" id="3.10.430.100">
    <property type="entry name" value="Ribosomal protein L9, C-terminal domain"/>
    <property type="match status" value="1"/>
</dbReference>
<dbReference type="Gene3D" id="3.40.5.10">
    <property type="entry name" value="Ribosomal protein L9, N-terminal domain"/>
    <property type="match status" value="1"/>
</dbReference>
<dbReference type="HAMAP" id="MF_00503">
    <property type="entry name" value="Ribosomal_bL9"/>
    <property type="match status" value="1"/>
</dbReference>
<dbReference type="InterPro" id="IPR000244">
    <property type="entry name" value="Ribosomal_bL9"/>
</dbReference>
<dbReference type="InterPro" id="IPR009027">
    <property type="entry name" value="Ribosomal_bL9/RNase_H1_N"/>
</dbReference>
<dbReference type="InterPro" id="IPR020594">
    <property type="entry name" value="Ribosomal_bL9_bac/chp"/>
</dbReference>
<dbReference type="InterPro" id="IPR020069">
    <property type="entry name" value="Ribosomal_bL9_C"/>
</dbReference>
<dbReference type="InterPro" id="IPR036791">
    <property type="entry name" value="Ribosomal_bL9_C_sf"/>
</dbReference>
<dbReference type="InterPro" id="IPR020070">
    <property type="entry name" value="Ribosomal_bL9_N"/>
</dbReference>
<dbReference type="InterPro" id="IPR036935">
    <property type="entry name" value="Ribosomal_bL9_N_sf"/>
</dbReference>
<dbReference type="NCBIfam" id="TIGR00158">
    <property type="entry name" value="L9"/>
    <property type="match status" value="1"/>
</dbReference>
<dbReference type="PANTHER" id="PTHR21368">
    <property type="entry name" value="50S RIBOSOMAL PROTEIN L9"/>
    <property type="match status" value="1"/>
</dbReference>
<dbReference type="Pfam" id="PF03948">
    <property type="entry name" value="Ribosomal_L9_C"/>
    <property type="match status" value="1"/>
</dbReference>
<dbReference type="Pfam" id="PF01281">
    <property type="entry name" value="Ribosomal_L9_N"/>
    <property type="match status" value="1"/>
</dbReference>
<dbReference type="SUPFAM" id="SSF55658">
    <property type="entry name" value="L9 N-domain-like"/>
    <property type="match status" value="1"/>
</dbReference>
<dbReference type="SUPFAM" id="SSF55653">
    <property type="entry name" value="Ribosomal protein L9 C-domain"/>
    <property type="match status" value="1"/>
</dbReference>
<dbReference type="PROSITE" id="PS00651">
    <property type="entry name" value="RIBOSOMAL_L9"/>
    <property type="match status" value="1"/>
</dbReference>
<comment type="function">
    <text evidence="1">Binds to the 23S rRNA.</text>
</comment>
<comment type="similarity">
    <text evidence="1">Belongs to the bacterial ribosomal protein bL9 family.</text>
</comment>
<keyword id="KW-0687">Ribonucleoprotein</keyword>
<keyword id="KW-0689">Ribosomal protein</keyword>
<keyword id="KW-0694">RNA-binding</keyword>
<keyword id="KW-0699">rRNA-binding</keyword>
<sequence>MNIILLDKIANLGGLGDQVTVKSGYARNFLFPQGKAVPATKDNVEKFEARRAELEAKIAEQLAAANARAEKVAELAEVTIAAPAGDEGKLFGSVGTRDIADAITAAGVEVQKAEVKLPTGTLRETGEYDIDLQLHSDVITSIKVIIIAEA</sequence>
<feature type="chain" id="PRO_1000126859" description="Large ribosomal subunit protein bL9">
    <location>
        <begin position="1"/>
        <end position="150"/>
    </location>
</feature>
<evidence type="ECO:0000255" key="1">
    <source>
        <dbReference type="HAMAP-Rule" id="MF_00503"/>
    </source>
</evidence>
<evidence type="ECO:0000305" key="2"/>
<proteinExistence type="inferred from homology"/>
<accession>B4S010</accession>
<accession>F2G9R2</accession>
<gene>
    <name evidence="1" type="primary">rplI</name>
    <name type="ordered locus">MADE_1018940</name>
</gene>
<name>RL9_ALTMD</name>